<proteinExistence type="evidence at protein level"/>
<keyword id="KW-0967">Endosome</keyword>
<keyword id="KW-0342">GTP-binding</keyword>
<keyword id="KW-0449">Lipoprotein</keyword>
<keyword id="KW-0472">Membrane</keyword>
<keyword id="KW-0488">Methylation</keyword>
<keyword id="KW-0547">Nucleotide-binding</keyword>
<keyword id="KW-0636">Prenylation</keyword>
<keyword id="KW-0653">Protein transport</keyword>
<keyword id="KW-1185">Reference proteome</keyword>
<keyword id="KW-0813">Transport</keyword>
<keyword id="KW-0926">Vacuole</keyword>
<accession>Q9LS94</accession>
<accession>Q8LGH5</accession>
<name>RAG3F_ARATH</name>
<reference key="1">
    <citation type="submission" date="2001-09" db="EMBL/GenBank/DDBJ databases">
        <title>Rab7 homologs in Arabidopsis thaliana.</title>
        <authorList>
            <person name="Ueda T."/>
            <person name="Wada Y."/>
            <person name="Nakano A."/>
        </authorList>
    </citation>
    <scope>NUCLEOTIDE SEQUENCE [MRNA]</scope>
</reference>
<reference key="2">
    <citation type="journal article" date="2000" name="DNA Res.">
        <title>Structural analysis of Arabidopsis thaliana chromosome 3. I. Sequence features of the regions of 4,504,864 bp covered by sixty P1 and TAC clones.</title>
        <authorList>
            <person name="Sato S."/>
            <person name="Nakamura Y."/>
            <person name="Kaneko T."/>
            <person name="Katoh T."/>
            <person name="Asamizu E."/>
            <person name="Tabata S."/>
        </authorList>
    </citation>
    <scope>NUCLEOTIDE SEQUENCE [LARGE SCALE GENOMIC DNA]</scope>
    <source>
        <strain>cv. Columbia</strain>
    </source>
</reference>
<reference key="3">
    <citation type="journal article" date="2017" name="Plant J.">
        <title>Araport11: a complete reannotation of the Arabidopsis thaliana reference genome.</title>
        <authorList>
            <person name="Cheng C.Y."/>
            <person name="Krishnakumar V."/>
            <person name="Chan A.P."/>
            <person name="Thibaud-Nissen F."/>
            <person name="Schobel S."/>
            <person name="Town C.D."/>
        </authorList>
    </citation>
    <scope>GENOME REANNOTATION</scope>
    <source>
        <strain>cv. Columbia</strain>
    </source>
</reference>
<reference key="4">
    <citation type="journal article" date="2003" name="Science">
        <title>Empirical analysis of transcriptional activity in the Arabidopsis genome.</title>
        <authorList>
            <person name="Yamada K."/>
            <person name="Lim J."/>
            <person name="Dale J.M."/>
            <person name="Chen H."/>
            <person name="Shinn P."/>
            <person name="Palm C.J."/>
            <person name="Southwick A.M."/>
            <person name="Wu H.C."/>
            <person name="Kim C.J."/>
            <person name="Nguyen M."/>
            <person name="Pham P.K."/>
            <person name="Cheuk R.F."/>
            <person name="Karlin-Newmann G."/>
            <person name="Liu S.X."/>
            <person name="Lam B."/>
            <person name="Sakano H."/>
            <person name="Wu T."/>
            <person name="Yu G."/>
            <person name="Miranda M."/>
            <person name="Quach H.L."/>
            <person name="Tripp M."/>
            <person name="Chang C.H."/>
            <person name="Lee J.M."/>
            <person name="Toriumi M.J."/>
            <person name="Chan M.M."/>
            <person name="Tang C.C."/>
            <person name="Onodera C.S."/>
            <person name="Deng J.M."/>
            <person name="Akiyama K."/>
            <person name="Ansari Y."/>
            <person name="Arakawa T."/>
            <person name="Banh J."/>
            <person name="Banno F."/>
            <person name="Bowser L."/>
            <person name="Brooks S.Y."/>
            <person name="Carninci P."/>
            <person name="Chao Q."/>
            <person name="Choy N."/>
            <person name="Enju A."/>
            <person name="Goldsmith A.D."/>
            <person name="Gurjal M."/>
            <person name="Hansen N.F."/>
            <person name="Hayashizaki Y."/>
            <person name="Johnson-Hopson C."/>
            <person name="Hsuan V.W."/>
            <person name="Iida K."/>
            <person name="Karnes M."/>
            <person name="Khan S."/>
            <person name="Koesema E."/>
            <person name="Ishida J."/>
            <person name="Jiang P.X."/>
            <person name="Jones T."/>
            <person name="Kawai J."/>
            <person name="Kamiya A."/>
            <person name="Meyers C."/>
            <person name="Nakajima M."/>
            <person name="Narusaka M."/>
            <person name="Seki M."/>
            <person name="Sakurai T."/>
            <person name="Satou M."/>
            <person name="Tamse R."/>
            <person name="Vaysberg M."/>
            <person name="Wallender E.K."/>
            <person name="Wong C."/>
            <person name="Yamamura Y."/>
            <person name="Yuan S."/>
            <person name="Shinozaki K."/>
            <person name="Davis R.W."/>
            <person name="Theologis A."/>
            <person name="Ecker J.R."/>
        </authorList>
    </citation>
    <scope>NUCLEOTIDE SEQUENCE [LARGE SCALE MRNA]</scope>
    <source>
        <strain>cv. Columbia</strain>
    </source>
</reference>
<reference key="5">
    <citation type="submission" date="2002-03" db="EMBL/GenBank/DDBJ databases">
        <title>Full-length cDNA from Arabidopsis thaliana.</title>
        <authorList>
            <person name="Brover V.V."/>
            <person name="Troukhan M.E."/>
            <person name="Alexandrov N.A."/>
            <person name="Lu Y.-P."/>
            <person name="Flavell R.B."/>
            <person name="Feldmann K.A."/>
        </authorList>
    </citation>
    <scope>NUCLEOTIDE SEQUENCE [LARGE SCALE MRNA]</scope>
</reference>
<reference key="6">
    <citation type="journal article" date="2003" name="Plant Physiol.">
        <title>Analysis of the small GTPase gene superfamily of Arabidopsis.</title>
        <authorList>
            <person name="Vernoud V."/>
            <person name="Horton A.C."/>
            <person name="Yang Z."/>
            <person name="Nielsen E."/>
        </authorList>
    </citation>
    <scope>GENE FAMILY</scope>
    <scope>NOMENCLATURE</scope>
</reference>
<reference key="7">
    <citation type="journal article" date="2013" name="J. Biol. Chem.">
        <title>Mechanisms governing the endosomal membrane recruitment of the core retromer in Arabidopsis.</title>
        <authorList>
            <person name="Zelazny E."/>
            <person name="Santambrogio M."/>
            <person name="Pourcher M."/>
            <person name="Chambrier P."/>
            <person name="Berne-Dedieu A."/>
            <person name="Fobis-Loisy I."/>
            <person name="Miege C."/>
            <person name="Jaillais Y."/>
            <person name="Gaude T."/>
        </authorList>
    </citation>
    <scope>FUNCTION</scope>
    <scope>INTERACTION WITH VPS35A</scope>
    <scope>SUBCELLULAR LOCATION</scope>
</reference>
<reference key="8">
    <citation type="journal article" date="2014" name="Plant Cell">
        <title>Activation of the Rab7 GTPase by the MON1-CCZ1 complex is essential for PVC-to-vacuole trafficking and plant growth in Arabidopsis.</title>
        <authorList>
            <person name="Cui Y."/>
            <person name="Zhao Q."/>
            <person name="Gao C."/>
            <person name="Ding Y."/>
            <person name="Zeng Y."/>
            <person name="Ueda T."/>
            <person name="Nakano A."/>
            <person name="Jiang L."/>
        </authorList>
    </citation>
    <scope>FUNCTION</scope>
    <scope>ACTIVITY REGULATION</scope>
    <scope>SUBCELLULAR LOCATION</scope>
    <scope>MUTAGENESIS OF THR-22 AND GLN-67</scope>
</reference>
<reference key="9">
    <citation type="journal article" date="2018" name="Proc. Natl. Acad. Sci. U.S.A.">
        <title>Distinct sets of tethering complexes, SNARE complexes, and Rab GTPases mediate membrane fusion at the vacuole in Arabidopsis.</title>
        <authorList>
            <person name="Takemoto K."/>
            <person name="Ebine K."/>
            <person name="Askani J.C."/>
            <person name="Krueger F."/>
            <person name="Gonzalez Z.A."/>
            <person name="Ito E."/>
            <person name="Goh T."/>
            <person name="Schumacher K."/>
            <person name="Nakano A."/>
            <person name="Ueda T."/>
        </authorList>
    </citation>
    <scope>SUBCELLULAR LOCATION</scope>
</reference>
<gene>
    <name type="primary">RABG3F</name>
    <name type="synonym">RAB71</name>
    <name type="synonym">RAB7B</name>
    <name type="ordered locus">At3g18820</name>
    <name type="ORF">MVE11.21</name>
</gene>
<protein>
    <recommendedName>
        <fullName>Ras-related protein RABG3f</fullName>
        <shortName>AtRABG3f</shortName>
    </recommendedName>
    <alternativeName>
        <fullName>Ras-related protein Rab71</fullName>
        <shortName>AtRab71</shortName>
    </alternativeName>
    <alternativeName>
        <fullName>Ras-related protein Rab7B</fullName>
        <shortName>AtRab7B</shortName>
    </alternativeName>
</protein>
<dbReference type="EMBL" id="AB071846">
    <property type="protein sequence ID" value="BAB68371.1"/>
    <property type="molecule type" value="mRNA"/>
</dbReference>
<dbReference type="EMBL" id="AB026654">
    <property type="protein sequence ID" value="BAB01810.1"/>
    <property type="molecule type" value="Genomic_DNA"/>
</dbReference>
<dbReference type="EMBL" id="CP002686">
    <property type="protein sequence ID" value="AEE76152.1"/>
    <property type="molecule type" value="Genomic_DNA"/>
</dbReference>
<dbReference type="EMBL" id="AY035137">
    <property type="protein sequence ID" value="AAK59641.1"/>
    <property type="molecule type" value="mRNA"/>
</dbReference>
<dbReference type="EMBL" id="AY059072">
    <property type="protein sequence ID" value="AAL15178.1"/>
    <property type="molecule type" value="mRNA"/>
</dbReference>
<dbReference type="EMBL" id="AY084266">
    <property type="protein sequence ID" value="AAM60858.1"/>
    <property type="molecule type" value="mRNA"/>
</dbReference>
<dbReference type="RefSeq" id="NP_188512.1">
    <property type="nucleotide sequence ID" value="NM_112768.3"/>
</dbReference>
<dbReference type="SMR" id="Q9LS94"/>
<dbReference type="FunCoup" id="Q9LS94">
    <property type="interactions" value="4259"/>
</dbReference>
<dbReference type="STRING" id="3702.Q9LS94"/>
<dbReference type="PaxDb" id="3702-AT3G18820.1"/>
<dbReference type="ProteomicsDB" id="236405"/>
<dbReference type="EnsemblPlants" id="AT3G18820.1">
    <property type="protein sequence ID" value="AT3G18820.1"/>
    <property type="gene ID" value="AT3G18820"/>
</dbReference>
<dbReference type="GeneID" id="821415"/>
<dbReference type="Gramene" id="AT3G18820.1">
    <property type="protein sequence ID" value="AT3G18820.1"/>
    <property type="gene ID" value="AT3G18820"/>
</dbReference>
<dbReference type="KEGG" id="ath:AT3G18820"/>
<dbReference type="Araport" id="AT3G18820"/>
<dbReference type="TAIR" id="AT3G18820">
    <property type="gene designation" value="RAB7B"/>
</dbReference>
<dbReference type="eggNOG" id="KOG0394">
    <property type="taxonomic scope" value="Eukaryota"/>
</dbReference>
<dbReference type="HOGENOM" id="CLU_041217_10_6_1"/>
<dbReference type="InParanoid" id="Q9LS94"/>
<dbReference type="OMA" id="FSHINSW"/>
<dbReference type="OrthoDB" id="1023759at2759"/>
<dbReference type="PhylomeDB" id="Q9LS94"/>
<dbReference type="PRO" id="PR:Q9LS94"/>
<dbReference type="Proteomes" id="UP000006548">
    <property type="component" value="Chromosome 3"/>
</dbReference>
<dbReference type="ExpressionAtlas" id="Q9LS94">
    <property type="expression patterns" value="baseline and differential"/>
</dbReference>
<dbReference type="GO" id="GO:0005829">
    <property type="term" value="C:cytosol"/>
    <property type="evidence" value="ECO:0007005"/>
    <property type="project" value="TAIR"/>
</dbReference>
<dbReference type="GO" id="GO:0010008">
    <property type="term" value="C:endosome membrane"/>
    <property type="evidence" value="ECO:0000314"/>
    <property type="project" value="UniProtKB"/>
</dbReference>
<dbReference type="GO" id="GO:0005794">
    <property type="term" value="C:Golgi apparatus"/>
    <property type="evidence" value="ECO:0007005"/>
    <property type="project" value="TAIR"/>
</dbReference>
<dbReference type="GO" id="GO:0005634">
    <property type="term" value="C:nucleus"/>
    <property type="evidence" value="ECO:0007005"/>
    <property type="project" value="TAIR"/>
</dbReference>
<dbReference type="GO" id="GO:0009705">
    <property type="term" value="C:plant-type vacuole membrane"/>
    <property type="evidence" value="ECO:0000314"/>
    <property type="project" value="UniProtKB"/>
</dbReference>
<dbReference type="GO" id="GO:0005886">
    <property type="term" value="C:plasma membrane"/>
    <property type="evidence" value="ECO:0007005"/>
    <property type="project" value="TAIR"/>
</dbReference>
<dbReference type="GO" id="GO:0005525">
    <property type="term" value="F:GTP binding"/>
    <property type="evidence" value="ECO:0007669"/>
    <property type="project" value="UniProtKB-KW"/>
</dbReference>
<dbReference type="GO" id="GO:0003924">
    <property type="term" value="F:GTPase activity"/>
    <property type="evidence" value="ECO:0007669"/>
    <property type="project" value="InterPro"/>
</dbReference>
<dbReference type="GO" id="GO:0006886">
    <property type="term" value="P:intracellular protein transport"/>
    <property type="evidence" value="ECO:0000315"/>
    <property type="project" value="UniProtKB"/>
</dbReference>
<dbReference type="GO" id="GO:0045324">
    <property type="term" value="P:late endosome to vacuole transport"/>
    <property type="evidence" value="ECO:0000315"/>
    <property type="project" value="UniProtKB"/>
</dbReference>
<dbReference type="GO" id="GO:0007033">
    <property type="term" value="P:vacuole organization"/>
    <property type="evidence" value="ECO:0000315"/>
    <property type="project" value="UniProtKB"/>
</dbReference>
<dbReference type="CDD" id="cd01862">
    <property type="entry name" value="Rab7"/>
    <property type="match status" value="1"/>
</dbReference>
<dbReference type="FunFam" id="3.40.50.300:FF:000295">
    <property type="entry name" value="Ras-related protein Rab7"/>
    <property type="match status" value="1"/>
</dbReference>
<dbReference type="Gene3D" id="3.40.50.300">
    <property type="entry name" value="P-loop containing nucleotide triphosphate hydrolases"/>
    <property type="match status" value="1"/>
</dbReference>
<dbReference type="InterPro" id="IPR027417">
    <property type="entry name" value="P-loop_NTPase"/>
</dbReference>
<dbReference type="InterPro" id="IPR005225">
    <property type="entry name" value="Small_GTP-bd"/>
</dbReference>
<dbReference type="InterPro" id="IPR001806">
    <property type="entry name" value="Small_GTPase"/>
</dbReference>
<dbReference type="NCBIfam" id="TIGR00231">
    <property type="entry name" value="small_GTP"/>
    <property type="match status" value="1"/>
</dbReference>
<dbReference type="PANTHER" id="PTHR47981">
    <property type="entry name" value="RAB FAMILY"/>
    <property type="match status" value="1"/>
</dbReference>
<dbReference type="PANTHER" id="PTHR47981:SF4">
    <property type="entry name" value="RAS-RELATED PROTEIN RABG3F"/>
    <property type="match status" value="1"/>
</dbReference>
<dbReference type="Pfam" id="PF00071">
    <property type="entry name" value="Ras"/>
    <property type="match status" value="1"/>
</dbReference>
<dbReference type="PRINTS" id="PR00449">
    <property type="entry name" value="RASTRNSFRMNG"/>
</dbReference>
<dbReference type="SMART" id="SM00175">
    <property type="entry name" value="RAB"/>
    <property type="match status" value="1"/>
</dbReference>
<dbReference type="SMART" id="SM00176">
    <property type="entry name" value="RAN"/>
    <property type="match status" value="1"/>
</dbReference>
<dbReference type="SMART" id="SM00173">
    <property type="entry name" value="RAS"/>
    <property type="match status" value="1"/>
</dbReference>
<dbReference type="SMART" id="SM00174">
    <property type="entry name" value="RHO"/>
    <property type="match status" value="1"/>
</dbReference>
<dbReference type="SUPFAM" id="SSF52540">
    <property type="entry name" value="P-loop containing nucleoside triphosphate hydrolases"/>
    <property type="match status" value="1"/>
</dbReference>
<dbReference type="PROSITE" id="PS51419">
    <property type="entry name" value="RAB"/>
    <property type="match status" value="1"/>
</dbReference>
<comment type="function">
    <text evidence="3 4">Essential for trafficking from prevacuolar compartments to vacuoles. Involved in the trafficking of newly synthesized protein to vacuoles. Essential for plant growth (PubMed:24824487). Participates in the recruitment of the core retromer components to the endosomal membrane by interacting with VPS35A (PubMed:23362252).</text>
</comment>
<comment type="activity regulation">
    <text evidence="4">Regulated by guanine nucleotide exchange factors (GEFs) which promote the exchange of bound GDP for free GTP. Regulated by the MON1-CCZ1 complex which serves as a link between Rab5 and Rab7 protein families in PVCs and mediates PVC maturation.</text>
</comment>
<comment type="subunit">
    <text evidence="3">Interacts with VPS35A.</text>
</comment>
<comment type="subcellular location">
    <subcellularLocation>
        <location evidence="3 4">Endosome membrane</location>
        <topology evidence="6">Lipid-anchor</topology>
    </subcellularLocation>
    <subcellularLocation>
        <location evidence="4 5">Vacuole membrane</location>
        <topology evidence="6">Lipid-anchor</topology>
        <orientation evidence="6">Cytoplasmic side</orientation>
    </subcellularLocation>
    <subcellularLocation>
        <location evidence="4">Prevacuolar compartment membrane</location>
        <topology evidence="6">Lipid-anchor</topology>
    </subcellularLocation>
    <text evidence="5">Partial co-localization with VPS3 at cytoplasmic punctate structures, and with VPS39 at subdomains of the vacuolar membrane. Co-localizes with VPS18.</text>
</comment>
<comment type="miscellaneous">
    <text evidence="4">Over-expression of a dominant negative form of RABG3F (Asn-22) inhibits degradation of storage proteins in the protein storage vacuole and results in seedling death.</text>
</comment>
<comment type="similarity">
    <text evidence="6">Belongs to the small GTPase superfamily. Rab family.</text>
</comment>
<evidence type="ECO:0000250" key="1"/>
<evidence type="ECO:0000250" key="2">
    <source>
        <dbReference type="UniProtKB" id="Q9SN68"/>
    </source>
</evidence>
<evidence type="ECO:0000269" key="3">
    <source>
    </source>
</evidence>
<evidence type="ECO:0000269" key="4">
    <source>
    </source>
</evidence>
<evidence type="ECO:0000269" key="5">
    <source>
    </source>
</evidence>
<evidence type="ECO:0000305" key="6"/>
<feature type="chain" id="PRO_0000407366" description="Ras-related protein RABG3f">
    <location>
        <begin position="1"/>
        <end position="206"/>
    </location>
</feature>
<feature type="short sequence motif" description="Effector region" evidence="1">
    <location>
        <begin position="37"/>
        <end position="45"/>
    </location>
</feature>
<feature type="binding site" evidence="2">
    <location>
        <begin position="15"/>
        <end position="23"/>
    </location>
    <ligand>
        <name>GTP</name>
        <dbReference type="ChEBI" id="CHEBI:37565"/>
    </ligand>
</feature>
<feature type="binding site" evidence="2">
    <location>
        <begin position="63"/>
        <end position="67"/>
    </location>
    <ligand>
        <name>GTP</name>
        <dbReference type="ChEBI" id="CHEBI:37565"/>
    </ligand>
</feature>
<feature type="binding site" evidence="2">
    <location>
        <begin position="125"/>
        <end position="128"/>
    </location>
    <ligand>
        <name>GTP</name>
        <dbReference type="ChEBI" id="CHEBI:37565"/>
    </ligand>
</feature>
<feature type="binding site" evidence="2">
    <location>
        <begin position="158"/>
        <end position="159"/>
    </location>
    <ligand>
        <name>GTP</name>
        <dbReference type="ChEBI" id="CHEBI:37565"/>
    </ligand>
</feature>
<feature type="modified residue" description="Cysteine methyl ester" evidence="1">
    <location>
        <position position="206"/>
    </location>
</feature>
<feature type="lipid moiety-binding region" description="S-geranylgeranyl cysteine" evidence="1">
    <location>
        <position position="204"/>
    </location>
</feature>
<feature type="lipid moiety-binding region" description="S-geranylgeranyl cysteine" evidence="1">
    <location>
        <position position="206"/>
    </location>
</feature>
<feature type="mutagenesis site" description="Dominant negative (GDP-bound form); loss of targeting to the prevacuolar compartments and tonoplast. Inhibits vacuolar trafficking and forms enlarged prevacuolar compartments. Inhibits degradation of storage proteins in the protein storage vacuole resulting in seedling death." evidence="4">
    <original>T</original>
    <variation>N</variation>
    <location>
        <position position="22"/>
    </location>
</feature>
<feature type="mutagenesis site" description="Constitutively active form (GTP-bound form); targets almost exclusively to tonoplast." evidence="4">
    <original>Q</original>
    <variation>L</variation>
    <location>
        <position position="67"/>
    </location>
</feature>
<feature type="sequence conflict" description="In Ref. 5; AAM60858." evidence="6" ref="5">
    <original>W</original>
    <variation>R</variation>
    <location>
        <position position="102"/>
    </location>
</feature>
<sequence length="206" mass="23102">MPSRRRTLLKVIILGDSGVGKTSLMNQYVNKKFSNQYKATIGADFLTKEVQFEDRLFTLQIWDTAGQERFQSLGVAFYRGADCCVLVYDVNSMKSFENLNNWREEFLIQASPSDPENFPFVLIGNKVDVDDGNSRVVSEKKAKAWCASKGNIPYFETSAKVGTNVEEAFQCIAKDALKSGEEEELYLPDTIDVGTSNQQRSTGCEC</sequence>
<organism>
    <name type="scientific">Arabidopsis thaliana</name>
    <name type="common">Mouse-ear cress</name>
    <dbReference type="NCBI Taxonomy" id="3702"/>
    <lineage>
        <taxon>Eukaryota</taxon>
        <taxon>Viridiplantae</taxon>
        <taxon>Streptophyta</taxon>
        <taxon>Embryophyta</taxon>
        <taxon>Tracheophyta</taxon>
        <taxon>Spermatophyta</taxon>
        <taxon>Magnoliopsida</taxon>
        <taxon>eudicotyledons</taxon>
        <taxon>Gunneridae</taxon>
        <taxon>Pentapetalae</taxon>
        <taxon>rosids</taxon>
        <taxon>malvids</taxon>
        <taxon>Brassicales</taxon>
        <taxon>Brassicaceae</taxon>
        <taxon>Camelineae</taxon>
        <taxon>Arabidopsis</taxon>
    </lineage>
</organism>